<protein>
    <recommendedName>
        <fullName evidence="1">Bifunctional F420 biosynthesis protein FbiB</fullName>
    </recommendedName>
    <domain>
        <recommendedName>
            <fullName evidence="1">Coenzyme F420:L-glutamate ligase</fullName>
            <ecNumber evidence="1">6.3.2.31</ecNumber>
            <ecNumber evidence="1">6.3.2.34</ecNumber>
        </recommendedName>
        <alternativeName>
            <fullName evidence="1">Coenzyme F420-0:L-glutamate ligase</fullName>
        </alternativeName>
        <alternativeName>
            <fullName evidence="1">Coenzyme F420-1:gamma-L-glutamate ligase</fullName>
        </alternativeName>
    </domain>
    <domain>
        <recommendedName>
            <fullName evidence="1">Dehydro-coenzyme F420-0 reductase</fullName>
            <ecNumber evidence="1">1.3.8.17</ecNumber>
        </recommendedName>
    </domain>
</protein>
<reference key="1">
    <citation type="journal article" date="2008" name="PLoS ONE">
        <title>Genetic basis of virulence attenuation revealed by comparative genomic analysis of Mycobacterium tuberculosis strain H37Ra versus H37Rv.</title>
        <authorList>
            <person name="Zheng H."/>
            <person name="Lu L."/>
            <person name="Wang B."/>
            <person name="Pu S."/>
            <person name="Zhang X."/>
            <person name="Zhu G."/>
            <person name="Shi W."/>
            <person name="Zhang L."/>
            <person name="Wang H."/>
            <person name="Wang S."/>
            <person name="Zhao G."/>
            <person name="Zhang Y."/>
        </authorList>
    </citation>
    <scope>NUCLEOTIDE SEQUENCE [LARGE SCALE GENOMIC DNA]</scope>
    <source>
        <strain>ATCC 25177 / H37Ra</strain>
    </source>
</reference>
<evidence type="ECO:0000255" key="1">
    <source>
        <dbReference type="HAMAP-Rule" id="MF_01259"/>
    </source>
</evidence>
<dbReference type="EC" id="6.3.2.31" evidence="1"/>
<dbReference type="EC" id="6.3.2.34" evidence="1"/>
<dbReference type="EC" id="1.3.8.17" evidence="1"/>
<dbReference type="EMBL" id="CP000611">
    <property type="protein sequence ID" value="ABQ75086.1"/>
    <property type="molecule type" value="Genomic_DNA"/>
</dbReference>
<dbReference type="RefSeq" id="WP_003900663.1">
    <property type="nucleotide sequence ID" value="NZ_CP016972.1"/>
</dbReference>
<dbReference type="SMR" id="A5U7T6"/>
<dbReference type="KEGG" id="mra:MRA_3303"/>
<dbReference type="eggNOG" id="COG0778">
    <property type="taxonomic scope" value="Bacteria"/>
</dbReference>
<dbReference type="eggNOG" id="COG1478">
    <property type="taxonomic scope" value="Bacteria"/>
</dbReference>
<dbReference type="HOGENOM" id="CLU_051152_0_0_11"/>
<dbReference type="UniPathway" id="UPA00071"/>
<dbReference type="Proteomes" id="UP000001988">
    <property type="component" value="Chromosome"/>
</dbReference>
<dbReference type="GO" id="GO:0052618">
    <property type="term" value="F:coenzyme F420-0:L-glutamate ligase activity"/>
    <property type="evidence" value="ECO:0007669"/>
    <property type="project" value="UniProtKB-UniRule"/>
</dbReference>
<dbReference type="GO" id="GO:0052619">
    <property type="term" value="F:coenzyme F420-1:gamma-L-glutamate ligase activity"/>
    <property type="evidence" value="ECO:0007669"/>
    <property type="project" value="UniProtKB-UniRule"/>
</dbReference>
<dbReference type="GO" id="GO:0005525">
    <property type="term" value="F:GTP binding"/>
    <property type="evidence" value="ECO:0007669"/>
    <property type="project" value="UniProtKB-KW"/>
</dbReference>
<dbReference type="GO" id="GO:0046872">
    <property type="term" value="F:metal ion binding"/>
    <property type="evidence" value="ECO:0007669"/>
    <property type="project" value="UniProtKB-KW"/>
</dbReference>
<dbReference type="GO" id="GO:0052890">
    <property type="term" value="F:oxidoreductase activity, acting on the CH-CH group of donors, with a flavin as acceptor"/>
    <property type="evidence" value="ECO:0007669"/>
    <property type="project" value="UniProtKB-UniRule"/>
</dbReference>
<dbReference type="GO" id="GO:0052645">
    <property type="term" value="P:F420-0 metabolic process"/>
    <property type="evidence" value="ECO:0007669"/>
    <property type="project" value="UniProtKB-UniRule"/>
</dbReference>
<dbReference type="CDD" id="cd20607">
    <property type="entry name" value="FbiB_C-like"/>
    <property type="match status" value="1"/>
</dbReference>
<dbReference type="FunFam" id="3.40.109.10:FF:000009">
    <property type="entry name" value="Coenzyme F420:L-glutamate ligase"/>
    <property type="match status" value="1"/>
</dbReference>
<dbReference type="Gene3D" id="3.30.1330.100">
    <property type="entry name" value="CofE-like"/>
    <property type="match status" value="1"/>
</dbReference>
<dbReference type="Gene3D" id="3.90.1660.10">
    <property type="entry name" value="CofE-like domain"/>
    <property type="match status" value="1"/>
</dbReference>
<dbReference type="Gene3D" id="3.40.109.10">
    <property type="entry name" value="NADH Oxidase"/>
    <property type="match status" value="1"/>
</dbReference>
<dbReference type="HAMAP" id="MF_01259">
    <property type="entry name" value="F420_ligase_FbiB"/>
    <property type="match status" value="1"/>
</dbReference>
<dbReference type="InterPro" id="IPR008225">
    <property type="entry name" value="F420-0_g-glutamyl_ligase"/>
</dbReference>
<dbReference type="InterPro" id="IPR002847">
    <property type="entry name" value="F420-0_gamma-glut_ligase-dom"/>
</dbReference>
<dbReference type="InterPro" id="IPR019943">
    <property type="entry name" value="F420_FbiB_C"/>
</dbReference>
<dbReference type="InterPro" id="IPR023661">
    <property type="entry name" value="FbiB"/>
</dbReference>
<dbReference type="InterPro" id="IPR029479">
    <property type="entry name" value="Nitroreductase"/>
</dbReference>
<dbReference type="InterPro" id="IPR000415">
    <property type="entry name" value="Nitroreductase-like"/>
</dbReference>
<dbReference type="NCBIfam" id="TIGR01916">
    <property type="entry name" value="F420_cofE"/>
    <property type="match status" value="1"/>
</dbReference>
<dbReference type="NCBIfam" id="TIGR03553">
    <property type="entry name" value="F420_FbiB_CTERM"/>
    <property type="match status" value="1"/>
</dbReference>
<dbReference type="NCBIfam" id="NF009810">
    <property type="entry name" value="PRK13294.1"/>
    <property type="match status" value="1"/>
</dbReference>
<dbReference type="PANTHER" id="PTHR47917">
    <property type="match status" value="1"/>
</dbReference>
<dbReference type="PANTHER" id="PTHR47917:SF1">
    <property type="entry name" value="COENZYME F420:L-GLUTAMATE LIGASE"/>
    <property type="match status" value="1"/>
</dbReference>
<dbReference type="Pfam" id="PF01996">
    <property type="entry name" value="F420_ligase"/>
    <property type="match status" value="1"/>
</dbReference>
<dbReference type="Pfam" id="PF00881">
    <property type="entry name" value="Nitroreductase"/>
    <property type="match status" value="1"/>
</dbReference>
<dbReference type="SUPFAM" id="SSF144010">
    <property type="entry name" value="CofE-like"/>
    <property type="match status" value="1"/>
</dbReference>
<dbReference type="SUPFAM" id="SSF55469">
    <property type="entry name" value="FMN-dependent nitroreductase-like"/>
    <property type="match status" value="1"/>
</dbReference>
<gene>
    <name evidence="1" type="primary">fbiB</name>
    <name type="ordered locus">MRA_3303</name>
</gene>
<feature type="chain" id="PRO_1000067262" description="Bifunctional F420 biosynthesis protein FbiB">
    <location>
        <begin position="1"/>
        <end position="448"/>
    </location>
</feature>
<feature type="region of interest" description="Coenzyme F420:L-glutamate ligase" evidence="1">
    <location>
        <begin position="1"/>
        <end position="244"/>
    </location>
</feature>
<feature type="region of interest" description="Dehydro-coenzyme F420-0 reductase" evidence="1">
    <location>
        <begin position="245"/>
        <end position="448"/>
    </location>
</feature>
<feature type="binding site" evidence="1">
    <location>
        <begin position="20"/>
        <end position="23"/>
    </location>
    <ligand>
        <name>GTP</name>
        <dbReference type="ChEBI" id="CHEBI:37565"/>
    </ligand>
</feature>
<feature type="binding site" evidence="1">
    <location>
        <position position="50"/>
    </location>
    <ligand>
        <name>GTP</name>
        <dbReference type="ChEBI" id="CHEBI:37565"/>
    </ligand>
</feature>
<feature type="binding site" evidence="1">
    <location>
        <position position="55"/>
    </location>
    <ligand>
        <name>GTP</name>
        <dbReference type="ChEBI" id="CHEBI:37565"/>
    </ligand>
</feature>
<feature type="binding site" evidence="1">
    <location>
        <position position="109"/>
    </location>
    <ligand>
        <name>a divalent metal cation</name>
        <dbReference type="ChEBI" id="CHEBI:60240"/>
        <label>1</label>
    </ligand>
</feature>
<feature type="binding site" evidence="1">
    <location>
        <position position="112"/>
    </location>
    <ligand>
        <name>GTP</name>
        <dbReference type="ChEBI" id="CHEBI:37565"/>
    </ligand>
</feature>
<feature type="binding site" evidence="1">
    <location>
        <position position="150"/>
    </location>
    <ligand>
        <name>a divalent metal cation</name>
        <dbReference type="ChEBI" id="CHEBI:60240"/>
        <label>1</label>
    </ligand>
</feature>
<feature type="binding site" evidence="1">
    <location>
        <position position="151"/>
    </location>
    <ligand>
        <name>a divalent metal cation</name>
        <dbReference type="ChEBI" id="CHEBI:60240"/>
        <label>2</label>
    </ligand>
</feature>
<feature type="binding site" evidence="1">
    <location>
        <begin position="260"/>
        <end position="264"/>
    </location>
    <ligand>
        <name>FMN</name>
        <dbReference type="ChEBI" id="CHEBI:58210"/>
    </ligand>
</feature>
<feature type="binding site" evidence="1">
    <location>
        <position position="288"/>
    </location>
    <ligand>
        <name>FMN</name>
        <dbReference type="ChEBI" id="CHEBI:58210"/>
    </ligand>
</feature>
<feature type="binding site" evidence="1">
    <location>
        <position position="320"/>
    </location>
    <ligand>
        <name>coenzyme F420-(gamma-Glu)n</name>
        <dbReference type="ChEBI" id="CHEBI:133980"/>
    </ligand>
</feature>
<feature type="binding site" evidence="1">
    <location>
        <position position="399"/>
    </location>
    <ligand>
        <name>FMN</name>
        <dbReference type="ChEBI" id="CHEBI:58210"/>
    </ligand>
</feature>
<feature type="binding site" evidence="1">
    <location>
        <position position="436"/>
    </location>
    <ligand>
        <name>FMN</name>
        <dbReference type="ChEBI" id="CHEBI:58210"/>
    </ligand>
</feature>
<proteinExistence type="inferred from homology"/>
<organism>
    <name type="scientific">Mycobacterium tuberculosis (strain ATCC 25177 / H37Ra)</name>
    <dbReference type="NCBI Taxonomy" id="419947"/>
    <lineage>
        <taxon>Bacteria</taxon>
        <taxon>Bacillati</taxon>
        <taxon>Actinomycetota</taxon>
        <taxon>Actinomycetes</taxon>
        <taxon>Mycobacteriales</taxon>
        <taxon>Mycobacteriaceae</taxon>
        <taxon>Mycobacterium</taxon>
        <taxon>Mycobacterium tuberculosis complex</taxon>
    </lineage>
</organism>
<accession>A5U7T6</accession>
<comment type="function">
    <text evidence="1">Bifunctional enzyme that catalyzes the GTP-dependent successive addition of multiple gamma-linked L-glutamates to the L-lactyl phosphodiester of 7,8-didemethyl-8-hydroxy-5-deazariboflavin (F420-0) to form polyglutamated F420 derivatives, and the FMNH2-dependent reduction of dehydro-F420-0 to form F420-0.</text>
</comment>
<comment type="catalytic activity">
    <reaction evidence="1">
        <text>oxidized coenzyme F420-0 + GTP + L-glutamate = oxidized coenzyme F420-1 + GDP + phosphate + H(+)</text>
        <dbReference type="Rhea" id="RHEA:30555"/>
        <dbReference type="ChEBI" id="CHEBI:15378"/>
        <dbReference type="ChEBI" id="CHEBI:29985"/>
        <dbReference type="ChEBI" id="CHEBI:37565"/>
        <dbReference type="ChEBI" id="CHEBI:43474"/>
        <dbReference type="ChEBI" id="CHEBI:58189"/>
        <dbReference type="ChEBI" id="CHEBI:59907"/>
        <dbReference type="ChEBI" id="CHEBI:59920"/>
        <dbReference type="EC" id="6.3.2.31"/>
    </reaction>
</comment>
<comment type="catalytic activity">
    <reaction evidence="1">
        <text>oxidized coenzyme F420-1 + GTP + L-glutamate = oxidized coenzyme F420-2 + GDP + phosphate + H(+)</text>
        <dbReference type="Rhea" id="RHEA:30523"/>
        <dbReference type="ChEBI" id="CHEBI:15378"/>
        <dbReference type="ChEBI" id="CHEBI:29985"/>
        <dbReference type="ChEBI" id="CHEBI:37565"/>
        <dbReference type="ChEBI" id="CHEBI:43474"/>
        <dbReference type="ChEBI" id="CHEBI:57922"/>
        <dbReference type="ChEBI" id="CHEBI:58189"/>
        <dbReference type="ChEBI" id="CHEBI:59920"/>
        <dbReference type="EC" id="6.3.2.34"/>
    </reaction>
</comment>
<comment type="catalytic activity">
    <reaction evidence="1">
        <text>oxidized coenzyme F420-(gamma-L-Glu)(n) + GTP + L-glutamate = oxidized coenzyme F420-(gamma-L-Glu)(n+1) + GDP + phosphate + H(+)</text>
        <dbReference type="Rhea" id="RHEA:51236"/>
        <dbReference type="Rhea" id="RHEA-COMP:12939"/>
        <dbReference type="Rhea" id="RHEA-COMP:12940"/>
        <dbReference type="ChEBI" id="CHEBI:15378"/>
        <dbReference type="ChEBI" id="CHEBI:29985"/>
        <dbReference type="ChEBI" id="CHEBI:37565"/>
        <dbReference type="ChEBI" id="CHEBI:43474"/>
        <dbReference type="ChEBI" id="CHEBI:58189"/>
        <dbReference type="ChEBI" id="CHEBI:133980"/>
    </reaction>
</comment>
<comment type="catalytic activity">
    <reaction evidence="1">
        <text>oxidized coenzyme F420-0 + FMN + H(+) = dehydro coenzyme F420-0 + FMNH2</text>
        <dbReference type="Rhea" id="RHEA:60360"/>
        <dbReference type="ChEBI" id="CHEBI:15378"/>
        <dbReference type="ChEBI" id="CHEBI:57618"/>
        <dbReference type="ChEBI" id="CHEBI:58210"/>
        <dbReference type="ChEBI" id="CHEBI:59907"/>
        <dbReference type="ChEBI" id="CHEBI:143705"/>
        <dbReference type="EC" id="1.3.8.17"/>
    </reaction>
</comment>
<comment type="cofactor">
    <cofactor evidence="1">
        <name>Mg(2+)</name>
        <dbReference type="ChEBI" id="CHEBI:18420"/>
    </cofactor>
    <cofactor evidence="1">
        <name>Mn(2+)</name>
        <dbReference type="ChEBI" id="CHEBI:29035"/>
    </cofactor>
    <text evidence="1">Binds 2 divalent metal cations per subunit. The ions could be magnesium and/or manganese.</text>
</comment>
<comment type="cofactor">
    <cofactor evidence="1">
        <name>K(+)</name>
        <dbReference type="ChEBI" id="CHEBI:29103"/>
    </cofactor>
    <text evidence="1">Monovalent cation. The ion could be potassium.</text>
</comment>
<comment type="pathway">
    <text evidence="1">Cofactor biosynthesis; coenzyme F420 biosynthesis.</text>
</comment>
<comment type="similarity">
    <text evidence="1">In the N-terminal section; belongs to the CofE family.</text>
</comment>
<name>FBIB_MYCTA</name>
<sequence length="448" mass="47578">MTGPEHGSASTIEILPVIGLPEFRPGDDLSAAVAAAAPWLRDGDVVVVTSKVVSKCEGRLVPAPEDPEQRDRLRRKLIEDEAVRVLARKDRTLITENRLGLVQAAAGVDGSNVGRSELALLPVDPDASAATLRAGLRERLGVTVAVVITDTMGRAWRNGQTDAAVGAAGLAVLRNYAGVRDPYGNELVVTEVAVADEIAAAADLVKGKLTATPVAVVRGFGVSDDGSTARQLLRPGANDLFWLGTAEALELGRQQAQLLRRSVRRFSTDPVPGDLVEAAVAEALTAPAPHHTRPTRFVWLQTPAIRARLLDRMKDKWRSDLTSDGLPADAIERRVARGQILYDAPEVVIPMLVPDGAHSYPDAARTDAEHTMFTVAVGAAVQALLVALAVRGLGSCWIGSTIFAADLVRDELDLPVDWEPLGAIAIGYADEPSGLRDPVPAADLLILK</sequence>
<keyword id="KW-0342">GTP-binding</keyword>
<keyword id="KW-0436">Ligase</keyword>
<keyword id="KW-0460">Magnesium</keyword>
<keyword id="KW-0464">Manganese</keyword>
<keyword id="KW-0479">Metal-binding</keyword>
<keyword id="KW-0511">Multifunctional enzyme</keyword>
<keyword id="KW-0547">Nucleotide-binding</keyword>
<keyword id="KW-0560">Oxidoreductase</keyword>
<keyword id="KW-0630">Potassium</keyword>
<keyword id="KW-1185">Reference proteome</keyword>